<proteinExistence type="evidence at transcript level"/>
<reference key="1">
    <citation type="submission" date="2004-11" db="EMBL/GenBank/DDBJ databases">
        <authorList>
            <consortium name="The German cDNA consortium"/>
        </authorList>
    </citation>
    <scope>NUCLEOTIDE SEQUENCE [LARGE SCALE MRNA]</scope>
    <source>
        <tissue>Brain cortex</tissue>
    </source>
</reference>
<keyword id="KW-0067">ATP-binding</keyword>
<keyword id="KW-0963">Cytoplasm</keyword>
<keyword id="KW-0418">Kinase</keyword>
<keyword id="KW-0547">Nucleotide-binding</keyword>
<keyword id="KW-0539">Nucleus</keyword>
<keyword id="KW-1185">Reference proteome</keyword>
<keyword id="KW-0723">Serine/threonine-protein kinase</keyword>
<keyword id="KW-0808">Transferase</keyword>
<dbReference type="EC" id="2.7.11.1"/>
<dbReference type="EMBL" id="CR860629">
    <property type="protein sequence ID" value="CAH92749.1"/>
    <property type="molecule type" value="mRNA"/>
</dbReference>
<dbReference type="RefSeq" id="NP_001126603.1">
    <property type="nucleotide sequence ID" value="NM_001133131.1"/>
</dbReference>
<dbReference type="SMR" id="Q5R667"/>
<dbReference type="FunCoup" id="Q5R667">
    <property type="interactions" value="2353"/>
</dbReference>
<dbReference type="STRING" id="9601.ENSPPYP00000001776"/>
<dbReference type="GeneID" id="100173600"/>
<dbReference type="KEGG" id="pon:100173600"/>
<dbReference type="CTD" id="83931"/>
<dbReference type="eggNOG" id="KOG0583">
    <property type="taxonomic scope" value="Eukaryota"/>
</dbReference>
<dbReference type="InParanoid" id="Q5R667"/>
<dbReference type="OrthoDB" id="410920at2759"/>
<dbReference type="Proteomes" id="UP000001595">
    <property type="component" value="Unplaced"/>
</dbReference>
<dbReference type="GO" id="GO:0005737">
    <property type="term" value="C:cytoplasm"/>
    <property type="evidence" value="ECO:0007669"/>
    <property type="project" value="UniProtKB-SubCell"/>
</dbReference>
<dbReference type="GO" id="GO:0005634">
    <property type="term" value="C:nucleus"/>
    <property type="evidence" value="ECO:0007669"/>
    <property type="project" value="UniProtKB-SubCell"/>
</dbReference>
<dbReference type="GO" id="GO:0005524">
    <property type="term" value="F:ATP binding"/>
    <property type="evidence" value="ECO:0007669"/>
    <property type="project" value="UniProtKB-KW"/>
</dbReference>
<dbReference type="GO" id="GO:0106310">
    <property type="term" value="F:protein serine kinase activity"/>
    <property type="evidence" value="ECO:0007669"/>
    <property type="project" value="RHEA"/>
</dbReference>
<dbReference type="GO" id="GO:0004674">
    <property type="term" value="F:protein serine/threonine kinase activity"/>
    <property type="evidence" value="ECO:0007669"/>
    <property type="project" value="UniProtKB-KW"/>
</dbReference>
<dbReference type="CDD" id="cd13974">
    <property type="entry name" value="STKc_SHIK"/>
    <property type="match status" value="1"/>
</dbReference>
<dbReference type="FunFam" id="1.10.510.10:FF:000269">
    <property type="entry name" value="Serine/threonine-protein kinase 40"/>
    <property type="match status" value="1"/>
</dbReference>
<dbReference type="Gene3D" id="1.10.510.10">
    <property type="entry name" value="Transferase(Phosphotransferase) domain 1"/>
    <property type="match status" value="1"/>
</dbReference>
<dbReference type="InterPro" id="IPR011009">
    <property type="entry name" value="Kinase-like_dom_sf"/>
</dbReference>
<dbReference type="InterPro" id="IPR000719">
    <property type="entry name" value="Prot_kinase_dom"/>
</dbReference>
<dbReference type="InterPro" id="IPR024236">
    <property type="entry name" value="Ser/Thr_kinase_40"/>
</dbReference>
<dbReference type="InterPro" id="IPR008271">
    <property type="entry name" value="Ser/Thr_kinase_AS"/>
</dbReference>
<dbReference type="InterPro" id="IPR024104">
    <property type="entry name" value="Tribbles/Ser_Thr_kinase_40"/>
</dbReference>
<dbReference type="PANTHER" id="PTHR22961">
    <property type="entry name" value="SER/THR PROTEIN KINASE-TRB"/>
    <property type="match status" value="1"/>
</dbReference>
<dbReference type="PANTHER" id="PTHR22961:SF16">
    <property type="entry name" value="SERINE_THREONINE-PROTEIN KINASE 40"/>
    <property type="match status" value="1"/>
</dbReference>
<dbReference type="Pfam" id="PF00069">
    <property type="entry name" value="Pkinase"/>
    <property type="match status" value="1"/>
</dbReference>
<dbReference type="SMART" id="SM00220">
    <property type="entry name" value="S_TKc"/>
    <property type="match status" value="1"/>
</dbReference>
<dbReference type="SUPFAM" id="SSF56112">
    <property type="entry name" value="Protein kinase-like (PK-like)"/>
    <property type="match status" value="1"/>
</dbReference>
<dbReference type="PROSITE" id="PS50011">
    <property type="entry name" value="PROTEIN_KINASE_DOM"/>
    <property type="match status" value="1"/>
</dbReference>
<dbReference type="PROSITE" id="PS00108">
    <property type="entry name" value="PROTEIN_KINASE_ST"/>
    <property type="match status" value="1"/>
</dbReference>
<sequence length="435" mass="48985">MKRRASDRGAGETSARAKALGSGISGNNAKRAGPFILGPRLGNSPVPSIVQCLARKDGTDDFYQLKILTLEERGDQGIESQEERQGKMLLHTEYSLLSLLHTQDGVVHHHGLFQDRTCEIVEDTESSRMVKKMKKRICLVLDCLCAHDFSDKTADLINLQHYVIKEKRLSERETVVIFYDVVRVVEALHQKNIVHRDLKLGNMVLNKRTHRITITNFCLGKHPVSEGDLLKDQRGSPAYISPDVLSGRPYRGKPSDMWALGVVLFTMLYGQFPFYDSIPQELFRKIKAAEYTIPEDGRVSENTVCLIRKLLVLDPQQRLAAADVLEALSAIIASWQSLSSLSGPLQVVPDIDDQMSNADSSQEAKVTEECSQYEFENYMRQQLLLAEEKSSIHDARSWVPKRQFGSAPPVRRLGHDAQPMTSLDTAILAQRYLRK</sequence>
<comment type="function">
    <text evidence="1">May be a negative regulator of NF-kappa-B and p53-mediated gene transcription.</text>
</comment>
<comment type="catalytic activity">
    <reaction>
        <text>L-seryl-[protein] + ATP = O-phospho-L-seryl-[protein] + ADP + H(+)</text>
        <dbReference type="Rhea" id="RHEA:17989"/>
        <dbReference type="Rhea" id="RHEA-COMP:9863"/>
        <dbReference type="Rhea" id="RHEA-COMP:11604"/>
        <dbReference type="ChEBI" id="CHEBI:15378"/>
        <dbReference type="ChEBI" id="CHEBI:29999"/>
        <dbReference type="ChEBI" id="CHEBI:30616"/>
        <dbReference type="ChEBI" id="CHEBI:83421"/>
        <dbReference type="ChEBI" id="CHEBI:456216"/>
        <dbReference type="EC" id="2.7.11.1"/>
    </reaction>
</comment>
<comment type="catalytic activity">
    <reaction>
        <text>L-threonyl-[protein] + ATP = O-phospho-L-threonyl-[protein] + ADP + H(+)</text>
        <dbReference type="Rhea" id="RHEA:46608"/>
        <dbReference type="Rhea" id="RHEA-COMP:11060"/>
        <dbReference type="Rhea" id="RHEA-COMP:11605"/>
        <dbReference type="ChEBI" id="CHEBI:15378"/>
        <dbReference type="ChEBI" id="CHEBI:30013"/>
        <dbReference type="ChEBI" id="CHEBI:30616"/>
        <dbReference type="ChEBI" id="CHEBI:61977"/>
        <dbReference type="ChEBI" id="CHEBI:456216"/>
        <dbReference type="EC" id="2.7.11.1"/>
    </reaction>
</comment>
<comment type="subcellular location">
    <subcellularLocation>
        <location evidence="1">Nucleus</location>
    </subcellularLocation>
    <subcellularLocation>
        <location evidence="1">Cytoplasm</location>
    </subcellularLocation>
</comment>
<comment type="similarity">
    <text evidence="5">Belongs to the protein kinase superfamily. CAMK Ser/Thr protein kinase family.</text>
</comment>
<protein>
    <recommendedName>
        <fullName>Serine/threonine-protein kinase 40</fullName>
        <ecNumber>2.7.11.1</ecNumber>
    </recommendedName>
</protein>
<name>STK40_PONAB</name>
<accession>Q5R667</accession>
<evidence type="ECO:0000250" key="1"/>
<evidence type="ECO:0000255" key="2">
    <source>
        <dbReference type="PROSITE-ProRule" id="PRU00159"/>
    </source>
</evidence>
<evidence type="ECO:0000255" key="3">
    <source>
        <dbReference type="PROSITE-ProRule" id="PRU10027"/>
    </source>
</evidence>
<evidence type="ECO:0000256" key="4">
    <source>
        <dbReference type="SAM" id="MobiDB-lite"/>
    </source>
</evidence>
<evidence type="ECO:0000305" key="5"/>
<organism>
    <name type="scientific">Pongo abelii</name>
    <name type="common">Sumatran orangutan</name>
    <name type="synonym">Pongo pygmaeus abelii</name>
    <dbReference type="NCBI Taxonomy" id="9601"/>
    <lineage>
        <taxon>Eukaryota</taxon>
        <taxon>Metazoa</taxon>
        <taxon>Chordata</taxon>
        <taxon>Craniata</taxon>
        <taxon>Vertebrata</taxon>
        <taxon>Euteleostomi</taxon>
        <taxon>Mammalia</taxon>
        <taxon>Eutheria</taxon>
        <taxon>Euarchontoglires</taxon>
        <taxon>Primates</taxon>
        <taxon>Haplorrhini</taxon>
        <taxon>Catarrhini</taxon>
        <taxon>Hominidae</taxon>
        <taxon>Pongo</taxon>
    </lineage>
</organism>
<gene>
    <name type="primary">STK40</name>
</gene>
<feature type="chain" id="PRO_0000252263" description="Serine/threonine-protein kinase 40">
    <location>
        <begin position="1"/>
        <end position="435"/>
    </location>
</feature>
<feature type="domain" description="Protein kinase" evidence="2">
    <location>
        <begin position="35"/>
        <end position="332"/>
    </location>
</feature>
<feature type="region of interest" description="Disordered" evidence="4">
    <location>
        <begin position="1"/>
        <end position="25"/>
    </location>
</feature>
<feature type="compositionally biased region" description="Basic and acidic residues" evidence="4">
    <location>
        <begin position="1"/>
        <end position="10"/>
    </location>
</feature>
<feature type="active site" description="Proton acceptor" evidence="2 3">
    <location>
        <position position="197"/>
    </location>
</feature>
<feature type="binding site" evidence="2">
    <location>
        <begin position="41"/>
        <end position="49"/>
    </location>
    <ligand>
        <name>ATP</name>
        <dbReference type="ChEBI" id="CHEBI:30616"/>
    </ligand>
</feature>
<feature type="binding site" evidence="2">
    <location>
        <position position="66"/>
    </location>
    <ligand>
        <name>ATP</name>
        <dbReference type="ChEBI" id="CHEBI:30616"/>
    </ligand>
</feature>